<keyword id="KW-0903">Direct protein sequencing</keyword>
<keyword id="KW-0687">Ribonucleoprotein</keyword>
<keyword id="KW-0689">Ribosomal protein</keyword>
<proteinExistence type="evidence at protein level"/>
<organism>
    <name type="scientific">Chlamydia trachomatis serovar L2 (strain ATCC VR-902B / DSM 19102 / 434/Bu)</name>
    <dbReference type="NCBI Taxonomy" id="471472"/>
    <lineage>
        <taxon>Bacteria</taxon>
        <taxon>Pseudomonadati</taxon>
        <taxon>Chlamydiota</taxon>
        <taxon>Chlamydiia</taxon>
        <taxon>Chlamydiales</taxon>
        <taxon>Chlamydiaceae</taxon>
        <taxon>Chlamydia/Chlamydophila group</taxon>
        <taxon>Chlamydia</taxon>
    </lineage>
</organism>
<gene>
    <name evidence="1" type="primary">rplL</name>
    <name type="ordered locus">CTL0568</name>
</gene>
<dbReference type="EMBL" id="AM884176">
    <property type="protein sequence ID" value="CAP04008.1"/>
    <property type="molecule type" value="Genomic_DNA"/>
</dbReference>
<dbReference type="RefSeq" id="WP_009872553.1">
    <property type="nucleotide sequence ID" value="NC_010287.1"/>
</dbReference>
<dbReference type="RefSeq" id="YP_001654644.1">
    <property type="nucleotide sequence ID" value="NC_010287.1"/>
</dbReference>
<dbReference type="SMR" id="B0B7N2"/>
<dbReference type="KEGG" id="ctb:CTL0568"/>
<dbReference type="PATRIC" id="fig|471472.4.peg.609"/>
<dbReference type="HOGENOM" id="CLU_086499_3_0_0"/>
<dbReference type="Proteomes" id="UP001154402">
    <property type="component" value="Chromosome"/>
</dbReference>
<dbReference type="GO" id="GO:0022625">
    <property type="term" value="C:cytosolic large ribosomal subunit"/>
    <property type="evidence" value="ECO:0007669"/>
    <property type="project" value="TreeGrafter"/>
</dbReference>
<dbReference type="GO" id="GO:0003729">
    <property type="term" value="F:mRNA binding"/>
    <property type="evidence" value="ECO:0007669"/>
    <property type="project" value="TreeGrafter"/>
</dbReference>
<dbReference type="GO" id="GO:0003735">
    <property type="term" value="F:structural constituent of ribosome"/>
    <property type="evidence" value="ECO:0007669"/>
    <property type="project" value="InterPro"/>
</dbReference>
<dbReference type="GO" id="GO:0006412">
    <property type="term" value="P:translation"/>
    <property type="evidence" value="ECO:0007669"/>
    <property type="project" value="UniProtKB-UniRule"/>
</dbReference>
<dbReference type="CDD" id="cd00387">
    <property type="entry name" value="Ribosomal_L7_L12"/>
    <property type="match status" value="1"/>
</dbReference>
<dbReference type="FunFam" id="1.20.5.710:FF:000007">
    <property type="entry name" value="50S ribosomal protein L7/L12"/>
    <property type="match status" value="1"/>
</dbReference>
<dbReference type="FunFam" id="3.30.1390.10:FF:000001">
    <property type="entry name" value="50S ribosomal protein L7/L12"/>
    <property type="match status" value="1"/>
</dbReference>
<dbReference type="Gene3D" id="3.30.1390.10">
    <property type="match status" value="1"/>
</dbReference>
<dbReference type="Gene3D" id="1.20.5.710">
    <property type="entry name" value="Single helix bin"/>
    <property type="match status" value="1"/>
</dbReference>
<dbReference type="HAMAP" id="MF_00368">
    <property type="entry name" value="Ribosomal_bL12"/>
    <property type="match status" value="1"/>
</dbReference>
<dbReference type="InterPro" id="IPR000206">
    <property type="entry name" value="Ribosomal_bL12"/>
</dbReference>
<dbReference type="InterPro" id="IPR013823">
    <property type="entry name" value="Ribosomal_bL12_C"/>
</dbReference>
<dbReference type="InterPro" id="IPR014719">
    <property type="entry name" value="Ribosomal_bL12_C/ClpS-like"/>
</dbReference>
<dbReference type="InterPro" id="IPR008932">
    <property type="entry name" value="Ribosomal_bL12_oligo"/>
</dbReference>
<dbReference type="InterPro" id="IPR036235">
    <property type="entry name" value="Ribosomal_bL12_oligo_N_sf"/>
</dbReference>
<dbReference type="NCBIfam" id="TIGR00855">
    <property type="entry name" value="L12"/>
    <property type="match status" value="1"/>
</dbReference>
<dbReference type="PANTHER" id="PTHR45987">
    <property type="entry name" value="39S RIBOSOMAL PROTEIN L12"/>
    <property type="match status" value="1"/>
</dbReference>
<dbReference type="PANTHER" id="PTHR45987:SF4">
    <property type="entry name" value="LARGE RIBOSOMAL SUBUNIT PROTEIN BL12M"/>
    <property type="match status" value="1"/>
</dbReference>
<dbReference type="Pfam" id="PF00542">
    <property type="entry name" value="Ribosomal_L12"/>
    <property type="match status" value="1"/>
</dbReference>
<dbReference type="Pfam" id="PF16320">
    <property type="entry name" value="Ribosomal_L12_N"/>
    <property type="match status" value="1"/>
</dbReference>
<dbReference type="SUPFAM" id="SSF54736">
    <property type="entry name" value="ClpS-like"/>
    <property type="match status" value="1"/>
</dbReference>
<dbReference type="SUPFAM" id="SSF48300">
    <property type="entry name" value="Ribosomal protein L7/12, oligomerisation (N-terminal) domain"/>
    <property type="match status" value="1"/>
</dbReference>
<feature type="initiator methionine" description="Removed" evidence="2">
    <location>
        <position position="1"/>
    </location>
</feature>
<feature type="chain" id="PRO_1000121411" description="Large ribosomal subunit protein bL12">
    <location>
        <begin position="2"/>
        <end position="130"/>
    </location>
</feature>
<sequence>MTTESLETLVEQLSGLTVLELSQLKKLLEEKWDVTAAAPVVAVAGAAAAGDAPASAEPTEFAVILEDVPSDKKIGVLKVVREVTGLALKEAKEMTEGLPKTVKEKTSKSDAEDTVKKLQEAGAKAVAKGL</sequence>
<protein>
    <recommendedName>
        <fullName evidence="1">Large ribosomal subunit protein bL12</fullName>
    </recommendedName>
    <alternativeName>
        <fullName evidence="3">50S ribosomal protein L7/L12</fullName>
    </alternativeName>
</protein>
<name>RL7_CHLT2</name>
<reference key="1">
    <citation type="journal article" date="2008" name="Genome Res.">
        <title>Chlamydia trachomatis: genome sequence analysis of lymphogranuloma venereum isolates.</title>
        <authorList>
            <person name="Thomson N.R."/>
            <person name="Holden M.T.G."/>
            <person name="Carder C."/>
            <person name="Lennard N."/>
            <person name="Lockey S.J."/>
            <person name="Marsh P."/>
            <person name="Skipp P."/>
            <person name="O'Connor C.D."/>
            <person name="Goodhead I."/>
            <person name="Norbertzcak H."/>
            <person name="Harris B."/>
            <person name="Ormond D."/>
            <person name="Rance R."/>
            <person name="Quail M.A."/>
            <person name="Parkhill J."/>
            <person name="Stephens R.S."/>
            <person name="Clarke I.N."/>
        </authorList>
    </citation>
    <scope>NUCLEOTIDE SEQUENCE [LARGE SCALE GENOMIC DNA]</scope>
    <source>
        <strain>ATCC VR-902B / DSM 19102 / 434/Bu</strain>
    </source>
</reference>
<reference key="2">
    <citation type="submission" date="1994-09" db="UniProtKB">
        <authorList>
            <person name="Bini L."/>
            <person name="Santucci A."/>
            <person name="Magi B."/>
            <person name="Marzocchi B."/>
            <person name="Sanchez-Campillo M."/>
            <person name="Comanducci M."/>
            <person name="Christianen G."/>
            <person name="Birkelund S."/>
            <person name="Vtretou E."/>
            <person name="Ratti G."/>
            <person name="Pallini V."/>
        </authorList>
    </citation>
    <scope>PROTEIN SEQUENCE OF 2-11</scope>
</reference>
<evidence type="ECO:0000255" key="1">
    <source>
        <dbReference type="HAMAP-Rule" id="MF_00368"/>
    </source>
</evidence>
<evidence type="ECO:0000269" key="2">
    <source ref="2"/>
</evidence>
<evidence type="ECO:0000305" key="3"/>
<accession>B0B7N2</accession>
<comment type="function">
    <text evidence="1">Forms part of the ribosomal stalk which helps the ribosome interact with GTP-bound translation factors. Is thus essential for accurate translation.</text>
</comment>
<comment type="subunit">
    <text evidence="1">Homodimer. Part of the ribosomal stalk of the 50S ribosomal subunit. Forms a multimeric L10(L12)X complex, where L10 forms an elongated spine to which 2 to 4 L12 dimers bind in a sequential fashion. Binds GTP-bound translation factors.</text>
</comment>
<comment type="similarity">
    <text evidence="1">Belongs to the bacterial ribosomal protein bL12 family.</text>
</comment>